<proteinExistence type="inferred from homology"/>
<sequence>MAAKEVKFGREARERLLRGVDILANAVKVTLGPKGRNVVIDKSFGAPRITKDGVSVAKEIELEDKFENMGAQMLREVASKTNDIAGDGTTTATVLGQAIVQEGVKAVAAGMNPMDLKRGIDAAVDEVVANLFKKAKKIQTSAEIAQVGTISANGAAEIGKMIADAMEKVGNEGVITVEEAKTAETELEVVEGMQFDRGYLSPYFVTNAEKMVADLDDPYILIHEKKLSNLQSLLPVLEAVVQSGKPLLIIAEDVEGEALATLVVNKLRGGLKIAAVKAPGFGDRRKAMLEDIAILTSGQVISEDVGIKLENVTLDMLGRAKKVNISKENTTIIDGAGQKSEINARVNQIKVQIEETTSDYDREKLQERLAKLAGGVAVIRVGGATEVEVKEKKDRVDDALNATRAAVEEGIVAGGGTALLRAANALTVKGSNPDQEAGINIVRRALQAPARQIATNAGEEAAIIVGKVLENNADTFGYNTATGEFGDLIALGIVDPVKVVRSALQNAASIASLLITTEAMVAEVPKKDTPVPPMPGGGMGGMGGMDF</sequence>
<reference key="1">
    <citation type="journal article" date="1997" name="Microbiology">
        <title>Heat shock response and groEL sequence of Bartonella henselae and Bartonella quintana.</title>
        <authorList>
            <person name="Haake D.A."/>
            <person name="Summers T.A."/>
            <person name="McCoy A.M."/>
            <person name="Schwartzman W."/>
        </authorList>
    </citation>
    <scope>NUCLEOTIDE SEQUENCE [GENOMIC DNA]</scope>
    <source>
        <strain>ATCC 49882 / DSM 28221 / CCUG 30454 / Houston 1</strain>
    </source>
</reference>
<reference key="2">
    <citation type="submission" date="2004-06" db="EMBL/GenBank/DDBJ databases">
        <title>Characterization of the Bartonella bacilliformis groES-EL operon.</title>
        <authorList>
            <person name="Callison J.A."/>
            <person name="Smitherman L.S."/>
            <person name="Read A.J."/>
            <person name="Birtles R.J."/>
            <person name="Minnick M.F."/>
        </authorList>
    </citation>
    <scope>NUCLEOTIDE SEQUENCE [GENOMIC DNA]</scope>
    <source>
        <strain>ATCC 49882 / DSM 28221 / CCUG 30454 / Houston 1</strain>
    </source>
</reference>
<reference key="3">
    <citation type="journal article" date="2004" name="Proc. Natl. Acad. Sci. U.S.A.">
        <title>The louse-borne human pathogen Bartonella quintana is a genomic derivative of the zoonotic agent Bartonella henselae.</title>
        <authorList>
            <person name="Alsmark U.C.M."/>
            <person name="Frank A.C."/>
            <person name="Karlberg E.O."/>
            <person name="Legault B.-A."/>
            <person name="Ardell D.H."/>
            <person name="Canbaeck B."/>
            <person name="Eriksson A.-S."/>
            <person name="Naeslund A.K."/>
            <person name="Handley S.A."/>
            <person name="Huvet M."/>
            <person name="La Scola B."/>
            <person name="Holmberg M."/>
            <person name="Andersson S.G.E."/>
        </authorList>
    </citation>
    <scope>NUCLEOTIDE SEQUENCE [LARGE SCALE GENOMIC DNA]</scope>
    <source>
        <strain>ATCC 49882 / DSM 28221 / CCUG 30454 / Houston 1</strain>
    </source>
</reference>
<reference key="4">
    <citation type="submission" date="1997-07" db="EMBL/GenBank/DDBJ databases">
        <title>Evaluation of intraspecies genetic variation within the 60 kDa heat shock protein (groEL) gene of Bartonella species: a new phylogenetic analysis tool.</title>
        <authorList>
            <person name="Marston E.L."/>
            <person name="Sumner J.W."/>
            <person name="Regnery R.L."/>
        </authorList>
    </citation>
    <scope>NUCLEOTIDE SEQUENCE [GENOMIC DNA] OF 1-543</scope>
    <source>
        <strain>ATCC 49882 / DSM 28221 / CCUG 30454 / Houston 1</strain>
    </source>
</reference>
<reference key="5">
    <citation type="journal article" date="1997" name="J. Clin. Microbiol.">
        <title>PCR amplification and comparison of nucleotide sequences from the groESL heat shock operon of Ehrlichia species.</title>
        <authorList>
            <person name="Sumner J.W."/>
            <person name="Nicholson W.L."/>
            <person name="Massung R.F."/>
        </authorList>
    </citation>
    <scope>NUCLEOTIDE SEQUENCE [GENOMIC DNA] OF 1-408</scope>
    <source>
        <strain>ATCC 49882 / DSM 28221 / CCUG 30454 / Houston 1</strain>
    </source>
</reference>
<evidence type="ECO:0000255" key="1">
    <source>
        <dbReference type="HAMAP-Rule" id="MF_00600"/>
    </source>
</evidence>
<evidence type="ECO:0000256" key="2">
    <source>
        <dbReference type="SAM" id="MobiDB-lite"/>
    </source>
</evidence>
<evidence type="ECO:0000305" key="3"/>
<keyword id="KW-0067">ATP-binding</keyword>
<keyword id="KW-0143">Chaperone</keyword>
<keyword id="KW-0963">Cytoplasm</keyword>
<keyword id="KW-0413">Isomerase</keyword>
<keyword id="KW-0547">Nucleotide-binding</keyword>
<keyword id="KW-0346">Stress response</keyword>
<protein>
    <recommendedName>
        <fullName evidence="1">Chaperonin GroEL</fullName>
        <ecNumber evidence="1">5.6.1.7</ecNumber>
    </recommendedName>
    <alternativeName>
        <fullName evidence="1">60 kDa chaperonin</fullName>
    </alternativeName>
    <alternativeName>
        <fullName evidence="1">Chaperonin-60</fullName>
        <shortName evidence="1">Cpn60</shortName>
    </alternativeName>
</protein>
<dbReference type="EC" id="5.6.1.7" evidence="1"/>
<dbReference type="EMBL" id="U78514">
    <property type="protein sequence ID" value="AAB69094.1"/>
    <property type="molecule type" value="Genomic_DNA"/>
</dbReference>
<dbReference type="EMBL" id="AJ749669">
    <property type="protein sequence ID" value="CAG44447.1"/>
    <property type="molecule type" value="Genomic_DNA"/>
</dbReference>
<dbReference type="EMBL" id="BX897699">
    <property type="protein sequence ID" value="CAF28126.1"/>
    <property type="molecule type" value="Genomic_DNA"/>
</dbReference>
<dbReference type="EMBL" id="AF014829">
    <property type="protein sequence ID" value="AAD04238.1"/>
    <property type="status" value="ALT_INIT"/>
    <property type="molecule type" value="Genomic_DNA"/>
</dbReference>
<dbReference type="EMBL" id="U96734">
    <property type="protein sequence ID" value="AAB65637.1"/>
    <property type="molecule type" value="Genomic_DNA"/>
</dbReference>
<dbReference type="RefSeq" id="WP_011181151.1">
    <property type="nucleotide sequence ID" value="NZ_LRIJ02000001.1"/>
</dbReference>
<dbReference type="SMR" id="O33963"/>
<dbReference type="PaxDb" id="283166-BH13530"/>
<dbReference type="EnsemblBacteria" id="CAF28126">
    <property type="protein sequence ID" value="CAF28126"/>
    <property type="gene ID" value="BH13530"/>
</dbReference>
<dbReference type="GeneID" id="92985963"/>
<dbReference type="KEGG" id="bhe:BH13530"/>
<dbReference type="eggNOG" id="COG0459">
    <property type="taxonomic scope" value="Bacteria"/>
</dbReference>
<dbReference type="OrthoDB" id="9766614at2"/>
<dbReference type="Proteomes" id="UP000000421">
    <property type="component" value="Chromosome"/>
</dbReference>
<dbReference type="GO" id="GO:0005737">
    <property type="term" value="C:cytoplasm"/>
    <property type="evidence" value="ECO:0007669"/>
    <property type="project" value="UniProtKB-SubCell"/>
</dbReference>
<dbReference type="GO" id="GO:0005524">
    <property type="term" value="F:ATP binding"/>
    <property type="evidence" value="ECO:0007669"/>
    <property type="project" value="UniProtKB-UniRule"/>
</dbReference>
<dbReference type="GO" id="GO:0140662">
    <property type="term" value="F:ATP-dependent protein folding chaperone"/>
    <property type="evidence" value="ECO:0007669"/>
    <property type="project" value="InterPro"/>
</dbReference>
<dbReference type="GO" id="GO:0016853">
    <property type="term" value="F:isomerase activity"/>
    <property type="evidence" value="ECO:0007669"/>
    <property type="project" value="UniProtKB-KW"/>
</dbReference>
<dbReference type="GO" id="GO:0051082">
    <property type="term" value="F:unfolded protein binding"/>
    <property type="evidence" value="ECO:0007669"/>
    <property type="project" value="UniProtKB-UniRule"/>
</dbReference>
<dbReference type="GO" id="GO:0042026">
    <property type="term" value="P:protein refolding"/>
    <property type="evidence" value="ECO:0007669"/>
    <property type="project" value="UniProtKB-UniRule"/>
</dbReference>
<dbReference type="CDD" id="cd03344">
    <property type="entry name" value="GroEL"/>
    <property type="match status" value="1"/>
</dbReference>
<dbReference type="FunFam" id="1.10.560.10:FF:000001">
    <property type="entry name" value="60 kDa chaperonin"/>
    <property type="match status" value="1"/>
</dbReference>
<dbReference type="FunFam" id="3.50.7.10:FF:000001">
    <property type="entry name" value="60 kDa chaperonin"/>
    <property type="match status" value="1"/>
</dbReference>
<dbReference type="Gene3D" id="3.50.7.10">
    <property type="entry name" value="GroEL"/>
    <property type="match status" value="1"/>
</dbReference>
<dbReference type="Gene3D" id="1.10.560.10">
    <property type="entry name" value="GroEL-like equatorial domain"/>
    <property type="match status" value="1"/>
</dbReference>
<dbReference type="Gene3D" id="3.30.260.10">
    <property type="entry name" value="TCP-1-like chaperonin intermediate domain"/>
    <property type="match status" value="1"/>
</dbReference>
<dbReference type="HAMAP" id="MF_00600">
    <property type="entry name" value="CH60"/>
    <property type="match status" value="1"/>
</dbReference>
<dbReference type="InterPro" id="IPR018370">
    <property type="entry name" value="Chaperonin_Cpn60_CS"/>
</dbReference>
<dbReference type="InterPro" id="IPR001844">
    <property type="entry name" value="Cpn60/GroEL"/>
</dbReference>
<dbReference type="InterPro" id="IPR002423">
    <property type="entry name" value="Cpn60/GroEL/TCP-1"/>
</dbReference>
<dbReference type="InterPro" id="IPR027409">
    <property type="entry name" value="GroEL-like_apical_dom_sf"/>
</dbReference>
<dbReference type="InterPro" id="IPR027413">
    <property type="entry name" value="GROEL-like_equatorial_sf"/>
</dbReference>
<dbReference type="InterPro" id="IPR027410">
    <property type="entry name" value="TCP-1-like_intermed_sf"/>
</dbReference>
<dbReference type="NCBIfam" id="TIGR02348">
    <property type="entry name" value="GroEL"/>
    <property type="match status" value="1"/>
</dbReference>
<dbReference type="NCBIfam" id="NF000592">
    <property type="entry name" value="PRK00013.1"/>
    <property type="match status" value="1"/>
</dbReference>
<dbReference type="NCBIfam" id="NF009487">
    <property type="entry name" value="PRK12849.1"/>
    <property type="match status" value="1"/>
</dbReference>
<dbReference type="NCBIfam" id="NF009488">
    <property type="entry name" value="PRK12850.1"/>
    <property type="match status" value="1"/>
</dbReference>
<dbReference type="NCBIfam" id="NF009489">
    <property type="entry name" value="PRK12851.1"/>
    <property type="match status" value="1"/>
</dbReference>
<dbReference type="PANTHER" id="PTHR45633">
    <property type="entry name" value="60 KDA HEAT SHOCK PROTEIN, MITOCHONDRIAL"/>
    <property type="match status" value="1"/>
</dbReference>
<dbReference type="Pfam" id="PF00118">
    <property type="entry name" value="Cpn60_TCP1"/>
    <property type="match status" value="1"/>
</dbReference>
<dbReference type="PRINTS" id="PR00298">
    <property type="entry name" value="CHAPERONIN60"/>
</dbReference>
<dbReference type="SUPFAM" id="SSF52029">
    <property type="entry name" value="GroEL apical domain-like"/>
    <property type="match status" value="1"/>
</dbReference>
<dbReference type="SUPFAM" id="SSF48592">
    <property type="entry name" value="GroEL equatorial domain-like"/>
    <property type="match status" value="1"/>
</dbReference>
<dbReference type="SUPFAM" id="SSF54849">
    <property type="entry name" value="GroEL-intermediate domain like"/>
    <property type="match status" value="1"/>
</dbReference>
<dbReference type="PROSITE" id="PS00296">
    <property type="entry name" value="CHAPERONINS_CPN60"/>
    <property type="match status" value="1"/>
</dbReference>
<organism>
    <name type="scientific">Bartonella henselae (strain ATCC 49882 / DSM 28221 / CCUG 30454 / Houston 1)</name>
    <name type="common">Rochalimaea henselae</name>
    <dbReference type="NCBI Taxonomy" id="283166"/>
    <lineage>
        <taxon>Bacteria</taxon>
        <taxon>Pseudomonadati</taxon>
        <taxon>Pseudomonadota</taxon>
        <taxon>Alphaproteobacteria</taxon>
        <taxon>Hyphomicrobiales</taxon>
        <taxon>Bartonellaceae</taxon>
        <taxon>Bartonella</taxon>
    </lineage>
</organism>
<gene>
    <name evidence="1" type="primary">groEL</name>
    <name evidence="1" type="synonym">groL</name>
    <name type="synonym">mopA</name>
    <name type="ordered locus">BH13530</name>
</gene>
<accession>O33963</accession>
<accession>O87267</accession>
<comment type="function">
    <text evidence="1">Together with its co-chaperonin GroES, plays an essential role in assisting protein folding. The GroEL-GroES system forms a nano-cage that allows encapsulation of the non-native substrate proteins and provides a physical environment optimized to promote and accelerate protein folding.</text>
</comment>
<comment type="catalytic activity">
    <reaction evidence="1">
        <text>ATP + H2O + a folded polypeptide = ADP + phosphate + an unfolded polypeptide.</text>
        <dbReference type="EC" id="5.6.1.7"/>
    </reaction>
</comment>
<comment type="subunit">
    <text evidence="1">Forms a cylinder of 14 subunits composed of two heptameric rings stacked back-to-back. Interacts with the co-chaperonin GroES.</text>
</comment>
<comment type="subcellular location">
    <subcellularLocation>
        <location evidence="1">Cytoplasm</location>
    </subcellularLocation>
</comment>
<comment type="similarity">
    <text evidence="1">Belongs to the chaperonin (HSP60) family.</text>
</comment>
<comment type="sequence caution" evidence="3">
    <conflict type="erroneous initiation">
        <sequence resource="EMBL-CDS" id="AAD04238"/>
    </conflict>
</comment>
<name>CH60_BARHE</name>
<feature type="chain" id="PRO_0000063283" description="Chaperonin GroEL">
    <location>
        <begin position="1"/>
        <end position="547"/>
    </location>
</feature>
<feature type="region of interest" description="Disordered" evidence="2">
    <location>
        <begin position="526"/>
        <end position="547"/>
    </location>
</feature>
<feature type="compositionally biased region" description="Gly residues" evidence="2">
    <location>
        <begin position="536"/>
        <end position="547"/>
    </location>
</feature>
<feature type="binding site" evidence="1">
    <location>
        <begin position="30"/>
        <end position="33"/>
    </location>
    <ligand>
        <name>ATP</name>
        <dbReference type="ChEBI" id="CHEBI:30616"/>
    </ligand>
</feature>
<feature type="binding site" evidence="1">
    <location>
        <position position="51"/>
    </location>
    <ligand>
        <name>ATP</name>
        <dbReference type="ChEBI" id="CHEBI:30616"/>
    </ligand>
</feature>
<feature type="binding site" evidence="1">
    <location>
        <begin position="87"/>
        <end position="91"/>
    </location>
    <ligand>
        <name>ATP</name>
        <dbReference type="ChEBI" id="CHEBI:30616"/>
    </ligand>
</feature>
<feature type="binding site" evidence="1">
    <location>
        <position position="415"/>
    </location>
    <ligand>
        <name>ATP</name>
        <dbReference type="ChEBI" id="CHEBI:30616"/>
    </ligand>
</feature>
<feature type="binding site" evidence="1">
    <location>
        <position position="495"/>
    </location>
    <ligand>
        <name>ATP</name>
        <dbReference type="ChEBI" id="CHEBI:30616"/>
    </ligand>
</feature>